<accession>Q5E7S8</accession>
<gene>
    <name evidence="1" type="primary">glsA</name>
    <name type="ordered locus">VF_0423</name>
</gene>
<keyword id="KW-0378">Hydrolase</keyword>
<keyword id="KW-1185">Reference proteome</keyword>
<proteinExistence type="inferred from homology"/>
<dbReference type="EC" id="3.5.1.2" evidence="1"/>
<dbReference type="EMBL" id="CP000020">
    <property type="protein sequence ID" value="AAW84918.1"/>
    <property type="molecule type" value="Genomic_DNA"/>
</dbReference>
<dbReference type="RefSeq" id="WP_005417557.1">
    <property type="nucleotide sequence ID" value="NC_006840.2"/>
</dbReference>
<dbReference type="RefSeq" id="YP_203806.1">
    <property type="nucleotide sequence ID" value="NC_006840.2"/>
</dbReference>
<dbReference type="SMR" id="Q5E7S8"/>
<dbReference type="STRING" id="312309.VF_0423"/>
<dbReference type="EnsemblBacteria" id="AAW84918">
    <property type="protein sequence ID" value="AAW84918"/>
    <property type="gene ID" value="VF_0423"/>
</dbReference>
<dbReference type="GeneID" id="54163060"/>
<dbReference type="KEGG" id="vfi:VF_0423"/>
<dbReference type="PATRIC" id="fig|312309.11.peg.413"/>
<dbReference type="eggNOG" id="COG2066">
    <property type="taxonomic scope" value="Bacteria"/>
</dbReference>
<dbReference type="HOGENOM" id="CLU_027932_1_1_6"/>
<dbReference type="OrthoDB" id="9788822at2"/>
<dbReference type="Proteomes" id="UP000000537">
    <property type="component" value="Chromosome I"/>
</dbReference>
<dbReference type="GO" id="GO:0004359">
    <property type="term" value="F:glutaminase activity"/>
    <property type="evidence" value="ECO:0007669"/>
    <property type="project" value="UniProtKB-UniRule"/>
</dbReference>
<dbReference type="GO" id="GO:0006537">
    <property type="term" value="P:glutamate biosynthetic process"/>
    <property type="evidence" value="ECO:0007669"/>
    <property type="project" value="TreeGrafter"/>
</dbReference>
<dbReference type="GO" id="GO:0006543">
    <property type="term" value="P:glutamine catabolic process"/>
    <property type="evidence" value="ECO:0007669"/>
    <property type="project" value="TreeGrafter"/>
</dbReference>
<dbReference type="FunFam" id="3.40.710.10:FF:000005">
    <property type="entry name" value="Glutaminase"/>
    <property type="match status" value="1"/>
</dbReference>
<dbReference type="Gene3D" id="3.40.710.10">
    <property type="entry name" value="DD-peptidase/beta-lactamase superfamily"/>
    <property type="match status" value="1"/>
</dbReference>
<dbReference type="HAMAP" id="MF_00313">
    <property type="entry name" value="Glutaminase"/>
    <property type="match status" value="1"/>
</dbReference>
<dbReference type="InterPro" id="IPR012338">
    <property type="entry name" value="Beta-lactam/transpept-like"/>
</dbReference>
<dbReference type="InterPro" id="IPR015868">
    <property type="entry name" value="Glutaminase"/>
</dbReference>
<dbReference type="NCBIfam" id="TIGR03814">
    <property type="entry name" value="Gln_ase"/>
    <property type="match status" value="1"/>
</dbReference>
<dbReference type="NCBIfam" id="NF002132">
    <property type="entry name" value="PRK00971.1-1"/>
    <property type="match status" value="1"/>
</dbReference>
<dbReference type="NCBIfam" id="NF002133">
    <property type="entry name" value="PRK00971.1-2"/>
    <property type="match status" value="1"/>
</dbReference>
<dbReference type="PANTHER" id="PTHR12544">
    <property type="entry name" value="GLUTAMINASE"/>
    <property type="match status" value="1"/>
</dbReference>
<dbReference type="PANTHER" id="PTHR12544:SF29">
    <property type="entry name" value="GLUTAMINASE"/>
    <property type="match status" value="1"/>
</dbReference>
<dbReference type="Pfam" id="PF04960">
    <property type="entry name" value="Glutaminase"/>
    <property type="match status" value="1"/>
</dbReference>
<dbReference type="SUPFAM" id="SSF56601">
    <property type="entry name" value="beta-lactamase/transpeptidase-like"/>
    <property type="match status" value="1"/>
</dbReference>
<evidence type="ECO:0000255" key="1">
    <source>
        <dbReference type="HAMAP-Rule" id="MF_00313"/>
    </source>
</evidence>
<comment type="catalytic activity">
    <reaction evidence="1">
        <text>L-glutamine + H2O = L-glutamate + NH4(+)</text>
        <dbReference type="Rhea" id="RHEA:15889"/>
        <dbReference type="ChEBI" id="CHEBI:15377"/>
        <dbReference type="ChEBI" id="CHEBI:28938"/>
        <dbReference type="ChEBI" id="CHEBI:29985"/>
        <dbReference type="ChEBI" id="CHEBI:58359"/>
        <dbReference type="EC" id="3.5.1.2"/>
    </reaction>
</comment>
<comment type="subunit">
    <text evidence="1">Homotetramer.</text>
</comment>
<comment type="similarity">
    <text evidence="1">Belongs to the glutaminase family.</text>
</comment>
<sequence>MKPTKQILEDILDEVRPLIGQGKVADYIPALACVPNDKLGIAVFTNDGEMLTAGDATECFSIQSISKALSLTLAMELYQPEELWQRVGKEPSGQAFNSLIQLEMEQGVPRNPFINAGAIVISDMLYSRFSAPKHRLLEFVRKLSGNDHIIYDRVVANSEMDHSDRNASIAYLMRSFGNFDNEVMPVLKNYFHACALSMNCVDLARTFGYLANKGIQPGISEPIVTPMQCKQINALMATCGLYDGAGEFAYRVGMPGKSGVGGGIIAIVPGEMTIAVWSPELDPSGNSLAGTKALELLSERIGRSIF</sequence>
<protein>
    <recommendedName>
        <fullName evidence="1">Glutaminase</fullName>
        <ecNumber evidence="1">3.5.1.2</ecNumber>
    </recommendedName>
</protein>
<feature type="chain" id="PRO_1000048366" description="Glutaminase">
    <location>
        <begin position="1"/>
        <end position="306"/>
    </location>
</feature>
<feature type="binding site" evidence="1">
    <location>
        <position position="64"/>
    </location>
    <ligand>
        <name>substrate</name>
    </ligand>
</feature>
<feature type="binding site" evidence="1">
    <location>
        <position position="115"/>
    </location>
    <ligand>
        <name>substrate</name>
    </ligand>
</feature>
<feature type="binding site" evidence="1">
    <location>
        <position position="159"/>
    </location>
    <ligand>
        <name>substrate</name>
    </ligand>
</feature>
<feature type="binding site" evidence="1">
    <location>
        <position position="166"/>
    </location>
    <ligand>
        <name>substrate</name>
    </ligand>
</feature>
<feature type="binding site" evidence="1">
    <location>
        <position position="190"/>
    </location>
    <ligand>
        <name>substrate</name>
    </ligand>
</feature>
<feature type="binding site" evidence="1">
    <location>
        <position position="242"/>
    </location>
    <ligand>
        <name>substrate</name>
    </ligand>
</feature>
<feature type="binding site" evidence="1">
    <location>
        <position position="260"/>
    </location>
    <ligand>
        <name>substrate</name>
    </ligand>
</feature>
<organism>
    <name type="scientific">Aliivibrio fischeri (strain ATCC 700601 / ES114)</name>
    <name type="common">Vibrio fischeri</name>
    <dbReference type="NCBI Taxonomy" id="312309"/>
    <lineage>
        <taxon>Bacteria</taxon>
        <taxon>Pseudomonadati</taxon>
        <taxon>Pseudomonadota</taxon>
        <taxon>Gammaproteobacteria</taxon>
        <taxon>Vibrionales</taxon>
        <taxon>Vibrionaceae</taxon>
        <taxon>Aliivibrio</taxon>
    </lineage>
</organism>
<reference key="1">
    <citation type="journal article" date="2005" name="Proc. Natl. Acad. Sci. U.S.A.">
        <title>Complete genome sequence of Vibrio fischeri: a symbiotic bacterium with pathogenic congeners.</title>
        <authorList>
            <person name="Ruby E.G."/>
            <person name="Urbanowski M."/>
            <person name="Campbell J."/>
            <person name="Dunn A."/>
            <person name="Faini M."/>
            <person name="Gunsalus R."/>
            <person name="Lostroh P."/>
            <person name="Lupp C."/>
            <person name="McCann J."/>
            <person name="Millikan D."/>
            <person name="Schaefer A."/>
            <person name="Stabb E."/>
            <person name="Stevens A."/>
            <person name="Visick K."/>
            <person name="Whistler C."/>
            <person name="Greenberg E.P."/>
        </authorList>
    </citation>
    <scope>NUCLEOTIDE SEQUENCE [LARGE SCALE GENOMIC DNA]</scope>
    <source>
        <strain>ATCC 700601 / ES114</strain>
    </source>
</reference>
<name>GLSA_ALIF1</name>